<accession>Q68VT4</accession>
<name>NTPP_RICTY</name>
<keyword id="KW-0963">Cytoplasm</keyword>
<keyword id="KW-0378">Hydrolase</keyword>
<keyword id="KW-0546">Nucleotide metabolism</keyword>
<sequence length="227" mass="25130">MKQHIKNLPIILASSSLTRVELLDRIKIIPAQIIPADIDETPNLRELPAPLAIRLAYGKAIKVASQIEKSSIIIAADTVAAVGRRILPKATTYEEVKHCIKMVSGRRHRVYTGLCIIKKENNQLTFRQKIVQTIIKFKKLSDEEINFYSSLDEGIDKAGGCKISGYAEAFISFISGSYSNIMGLPLFETVNALTSLGFRYSDNTANVCKDLSTKSMVQNHFGKPSIS</sequence>
<evidence type="ECO:0000255" key="1">
    <source>
        <dbReference type="HAMAP-Rule" id="MF_00528"/>
    </source>
</evidence>
<feature type="chain" id="PRO_0000267412" description="Nucleoside triphosphate pyrophosphatase">
    <location>
        <begin position="1"/>
        <end position="227"/>
    </location>
</feature>
<feature type="active site" description="Proton acceptor" evidence="1">
    <location>
        <position position="77"/>
    </location>
</feature>
<dbReference type="EC" id="3.6.1.9" evidence="1"/>
<dbReference type="EMBL" id="AE017197">
    <property type="protein sequence ID" value="AAU04258.1"/>
    <property type="molecule type" value="Genomic_DNA"/>
</dbReference>
<dbReference type="RefSeq" id="WP_011191232.1">
    <property type="nucleotide sequence ID" value="NC_006142.1"/>
</dbReference>
<dbReference type="SMR" id="Q68VT4"/>
<dbReference type="KEGG" id="rty:RT0803"/>
<dbReference type="eggNOG" id="COG0424">
    <property type="taxonomic scope" value="Bacteria"/>
</dbReference>
<dbReference type="HOGENOM" id="CLU_040416_2_0_5"/>
<dbReference type="OrthoDB" id="9807767at2"/>
<dbReference type="Proteomes" id="UP000000604">
    <property type="component" value="Chromosome"/>
</dbReference>
<dbReference type="GO" id="GO:0005737">
    <property type="term" value="C:cytoplasm"/>
    <property type="evidence" value="ECO:0007669"/>
    <property type="project" value="UniProtKB-SubCell"/>
</dbReference>
<dbReference type="GO" id="GO:0047429">
    <property type="term" value="F:nucleoside triphosphate diphosphatase activity"/>
    <property type="evidence" value="ECO:0007669"/>
    <property type="project" value="UniProtKB-EC"/>
</dbReference>
<dbReference type="GO" id="GO:0009117">
    <property type="term" value="P:nucleotide metabolic process"/>
    <property type="evidence" value="ECO:0007669"/>
    <property type="project" value="UniProtKB-KW"/>
</dbReference>
<dbReference type="CDD" id="cd00555">
    <property type="entry name" value="Maf"/>
    <property type="match status" value="1"/>
</dbReference>
<dbReference type="Gene3D" id="3.90.950.10">
    <property type="match status" value="1"/>
</dbReference>
<dbReference type="HAMAP" id="MF_00528">
    <property type="entry name" value="Maf"/>
    <property type="match status" value="1"/>
</dbReference>
<dbReference type="InterPro" id="IPR029001">
    <property type="entry name" value="ITPase-like_fam"/>
</dbReference>
<dbReference type="InterPro" id="IPR003697">
    <property type="entry name" value="Maf-like"/>
</dbReference>
<dbReference type="NCBIfam" id="TIGR00172">
    <property type="entry name" value="maf"/>
    <property type="match status" value="1"/>
</dbReference>
<dbReference type="PANTHER" id="PTHR43213">
    <property type="entry name" value="BIFUNCTIONAL DTTP/UTP PYROPHOSPHATASE/METHYLTRANSFERASE PROTEIN-RELATED"/>
    <property type="match status" value="1"/>
</dbReference>
<dbReference type="PANTHER" id="PTHR43213:SF5">
    <property type="entry name" value="BIFUNCTIONAL DTTP_UTP PYROPHOSPHATASE_METHYLTRANSFERASE PROTEIN-RELATED"/>
    <property type="match status" value="1"/>
</dbReference>
<dbReference type="Pfam" id="PF02545">
    <property type="entry name" value="Maf"/>
    <property type="match status" value="1"/>
</dbReference>
<dbReference type="PIRSF" id="PIRSF006305">
    <property type="entry name" value="Maf"/>
    <property type="match status" value="1"/>
</dbReference>
<dbReference type="SUPFAM" id="SSF52972">
    <property type="entry name" value="ITPase-like"/>
    <property type="match status" value="1"/>
</dbReference>
<comment type="function">
    <text evidence="1">Nucleoside triphosphate pyrophosphatase. May have a dual role in cell division arrest and in preventing the incorporation of modified nucleotides into cellular nucleic acids.</text>
</comment>
<comment type="catalytic activity">
    <reaction evidence="1">
        <text>a ribonucleoside 5'-triphosphate + H2O = a ribonucleoside 5'-phosphate + diphosphate + H(+)</text>
        <dbReference type="Rhea" id="RHEA:23996"/>
        <dbReference type="ChEBI" id="CHEBI:15377"/>
        <dbReference type="ChEBI" id="CHEBI:15378"/>
        <dbReference type="ChEBI" id="CHEBI:33019"/>
        <dbReference type="ChEBI" id="CHEBI:58043"/>
        <dbReference type="ChEBI" id="CHEBI:61557"/>
        <dbReference type="EC" id="3.6.1.9"/>
    </reaction>
</comment>
<comment type="catalytic activity">
    <reaction evidence="1">
        <text>a 2'-deoxyribonucleoside 5'-triphosphate + H2O = a 2'-deoxyribonucleoside 5'-phosphate + diphosphate + H(+)</text>
        <dbReference type="Rhea" id="RHEA:44644"/>
        <dbReference type="ChEBI" id="CHEBI:15377"/>
        <dbReference type="ChEBI" id="CHEBI:15378"/>
        <dbReference type="ChEBI" id="CHEBI:33019"/>
        <dbReference type="ChEBI" id="CHEBI:61560"/>
        <dbReference type="ChEBI" id="CHEBI:65317"/>
        <dbReference type="EC" id="3.6.1.9"/>
    </reaction>
</comment>
<comment type="cofactor">
    <cofactor evidence="1">
        <name>a divalent metal cation</name>
        <dbReference type="ChEBI" id="CHEBI:60240"/>
    </cofactor>
</comment>
<comment type="subcellular location">
    <subcellularLocation>
        <location evidence="1">Cytoplasm</location>
    </subcellularLocation>
</comment>
<comment type="similarity">
    <text evidence="1">Belongs to the Maf family.</text>
</comment>
<gene>
    <name type="ordered locus">RT0803</name>
</gene>
<proteinExistence type="inferred from homology"/>
<protein>
    <recommendedName>
        <fullName evidence="1">Nucleoside triphosphate pyrophosphatase</fullName>
        <ecNumber evidence="1">3.6.1.9</ecNumber>
    </recommendedName>
    <alternativeName>
        <fullName evidence="1">Nucleotide pyrophosphatase</fullName>
        <shortName evidence="1">Nucleotide PPase</shortName>
    </alternativeName>
</protein>
<organism>
    <name type="scientific">Rickettsia typhi (strain ATCC VR-144 / Wilmington)</name>
    <dbReference type="NCBI Taxonomy" id="257363"/>
    <lineage>
        <taxon>Bacteria</taxon>
        <taxon>Pseudomonadati</taxon>
        <taxon>Pseudomonadota</taxon>
        <taxon>Alphaproteobacteria</taxon>
        <taxon>Rickettsiales</taxon>
        <taxon>Rickettsiaceae</taxon>
        <taxon>Rickettsieae</taxon>
        <taxon>Rickettsia</taxon>
        <taxon>typhus group</taxon>
    </lineage>
</organism>
<reference key="1">
    <citation type="journal article" date="2004" name="J. Bacteriol.">
        <title>Complete genome sequence of Rickettsia typhi and comparison with sequences of other Rickettsiae.</title>
        <authorList>
            <person name="McLeod M.P."/>
            <person name="Qin X."/>
            <person name="Karpathy S.E."/>
            <person name="Gioia J."/>
            <person name="Highlander S.K."/>
            <person name="Fox G.E."/>
            <person name="McNeill T.Z."/>
            <person name="Jiang H."/>
            <person name="Muzny D."/>
            <person name="Jacob L.S."/>
            <person name="Hawes A.C."/>
            <person name="Sodergren E."/>
            <person name="Gill R."/>
            <person name="Hume J."/>
            <person name="Morgan M."/>
            <person name="Fan G."/>
            <person name="Amin A.G."/>
            <person name="Gibbs R.A."/>
            <person name="Hong C."/>
            <person name="Yu X.-J."/>
            <person name="Walker D.H."/>
            <person name="Weinstock G.M."/>
        </authorList>
    </citation>
    <scope>NUCLEOTIDE SEQUENCE [LARGE SCALE GENOMIC DNA]</scope>
    <source>
        <strain>ATCC VR-144 / Wilmington</strain>
    </source>
</reference>